<name>PG122_VACCW</name>
<feature type="chain" id="PRO_0000057098" description="mRNA-decapping protein OPG122">
    <location>
        <begin position="1"/>
        <end position="248"/>
    </location>
</feature>
<feature type="domain" description="Nudix hydrolase" evidence="1">
    <location>
        <begin position="45"/>
        <end position="227"/>
    </location>
</feature>
<feature type="short sequence motif" description="Nudix box" evidence="1">
    <location>
        <begin position="126"/>
        <end position="147"/>
    </location>
</feature>
<feature type="active site" description="Nucleophile" evidence="7">
    <location>
        <position position="141"/>
    </location>
</feature>
<feature type="binding site" evidence="7">
    <location>
        <position position="132"/>
    </location>
    <ligand>
        <name>Mg(2+)</name>
        <dbReference type="ChEBI" id="CHEBI:18420"/>
    </ligand>
</feature>
<feature type="binding site" evidence="7">
    <location>
        <position position="145"/>
    </location>
    <ligand>
        <name>Mn(2+)</name>
        <dbReference type="ChEBI" id="CHEBI:29035"/>
    </ligand>
</feature>
<feature type="binding site" evidence="7">
    <location>
        <position position="167"/>
    </location>
    <ligand>
        <name>Mg(2+)</name>
        <dbReference type="ChEBI" id="CHEBI:18420"/>
    </ligand>
</feature>
<feature type="mutagenesis site" description="Loss of localization to the host mitochondria; when associated with T-12 and T-13." evidence="6">
    <original>I</original>
    <variation>T</variation>
    <location>
        <position position="9"/>
    </location>
</feature>
<feature type="mutagenesis site" description="Loss of localization to the host mitochondria; when associated with T-9 and T-13." evidence="6">
    <original>I</original>
    <variation>T</variation>
    <location>
        <position position="12"/>
    </location>
</feature>
<feature type="mutagenesis site" description="Loss of localization to the host mitochondria; when associated with T-9 and T-12." evidence="6">
    <original>I</original>
    <variation>T</variation>
    <location>
        <position position="13"/>
    </location>
</feature>
<feature type="mutagenesis site" description="90% loss of decapping activity." evidence="4">
    <original>E</original>
    <variation>A</variation>
    <location>
        <position position="99"/>
    </location>
</feature>
<feature type="mutagenesis site" description="90% loss of decapping activity." evidence="4">
    <original>R</original>
    <variation>A</variation>
    <location>
        <position position="118"/>
    </location>
</feature>
<feature type="mutagenesis site" description="90% loss of decapping activity." evidence="4">
    <original>D</original>
    <variation>A</variation>
    <location>
        <position position="120"/>
    </location>
</feature>
<feature type="mutagenesis site" description="90% loss of decapping activity." evidence="4">
    <original>K</original>
    <variation>A</variation>
    <location>
        <position position="129"/>
    </location>
</feature>
<feature type="mutagenesis site" description="5-fold loss of affinity for magnesium, no effect on manganese affinity." evidence="3">
    <original>E</original>
    <variation>A</variation>
    <location>
        <position position="132"/>
    </location>
</feature>
<feature type="mutagenesis site" description="Slight change in magnesium or manganese binding." evidence="2 3">
    <original>E</original>
    <variation>A</variation>
    <location>
        <position position="141"/>
    </location>
</feature>
<feature type="mutagenesis site" description="Complete loss of decapping activity." evidence="2 3">
    <original>E</original>
    <variation>Q</variation>
    <location>
        <position position="141"/>
    </location>
</feature>
<feature type="mutagenesis site" description="90% loss of decapping activity." evidence="2 4">
    <original>E</original>
    <variation>A</variation>
    <location>
        <position position="144"/>
    </location>
</feature>
<feature type="mutagenesis site" description="Complete loss of decapping activity." evidence="2 4">
    <original>E</original>
    <variation>Q</variation>
    <location>
        <position position="144"/>
    </location>
</feature>
<feature type="mutagenesis site" description="2-fold loss of affinity for magnesium, 6-fold loss of affinity for manganese." evidence="2 3">
    <original>E</original>
    <variation>A</variation>
    <location>
        <position position="145"/>
    </location>
</feature>
<feature type="mutagenesis site" description="Complete loss of decapping activity." evidence="2 3">
    <original>E</original>
    <variation>Q</variation>
    <location>
        <position position="145"/>
    </location>
</feature>
<feature type="mutagenesis site" description="75% loss of decapping activity." evidence="4">
    <original>D</original>
    <variation>A</variation>
    <location>
        <position position="167"/>
    </location>
</feature>
<feature type="mutagenesis site" description="75% loss of decapping activity." evidence="4">
    <original>K</original>
    <variation>A</variation>
    <location>
        <position position="220"/>
    </location>
</feature>
<feature type="mutagenesis site" description="75% loss of decapping activity." evidence="4">
    <original>Y</original>
    <variation>A</variation>
    <location>
        <position position="221"/>
    </location>
</feature>
<proteinExistence type="evidence at protein level"/>
<keyword id="KW-1045">Host mitochondrion</keyword>
<keyword id="KW-0378">Hydrolase</keyword>
<keyword id="KW-0460">Magnesium</keyword>
<keyword id="KW-0464">Manganese</keyword>
<keyword id="KW-0479">Metal-binding</keyword>
<keyword id="KW-1185">Reference proteome</keyword>
<comment type="function">
    <text evidence="5 6">Decapping enzyme that remove the protective 5'-cap from both host and viral mRNAs to commit transcripts for decay by the cellular exonuclease XRN1 (PubMed:24155373, PubMed:35202449). Preferentially targets spliced mRNAs and since all viral genes are intronless, it preferentially targets host over viral transcripts (PubMed:35202449). Acceleration of the turnover of cellular transcripts promotes the shutoff of host protein synthesis and therefore diminish the magnitude of antiviral response (PubMed:24155373, PubMed:35435699).</text>
</comment>
<comment type="cofactor">
    <cofactor evidence="3">
        <name>Mg(2+)</name>
        <dbReference type="ChEBI" id="CHEBI:18420"/>
    </cofactor>
    <cofactor evidence="3">
        <name>Mn(2+)</name>
        <dbReference type="ChEBI" id="CHEBI:29035"/>
    </cofactor>
</comment>
<comment type="biophysicochemical properties">
    <kinetics>
        <KM>3.4 nM for capped RNA</KM>
    </kinetics>
</comment>
<comment type="subcellular location">
    <subcellularLocation>
        <location evidence="6">Host mitochondrion</location>
    </subcellularLocation>
    <text evidence="6">Mitochondria localization is required to efficiently decap mRNAs.</text>
</comment>
<comment type="induction">
    <text>Expressed in the late phase of the viral replicative cycle.</text>
</comment>
<comment type="similarity">
    <text evidence="7">Belongs to the Nudix hydrolase family.</text>
</comment>
<protein>
    <recommendedName>
        <fullName>mRNA-decapping protein OPG122</fullName>
        <ecNumber>3.1.3.-</ecNumber>
    </recommendedName>
</protein>
<evidence type="ECO:0000255" key="1">
    <source>
        <dbReference type="PROSITE-ProRule" id="PRU00794"/>
    </source>
</evidence>
<evidence type="ECO:0000269" key="2">
    <source>
    </source>
</evidence>
<evidence type="ECO:0000269" key="3">
    <source>
    </source>
</evidence>
<evidence type="ECO:0000269" key="4">
    <source>
    </source>
</evidence>
<evidence type="ECO:0000269" key="5">
    <source>
    </source>
</evidence>
<evidence type="ECO:0000269" key="6">
    <source>
    </source>
</evidence>
<evidence type="ECO:0000305" key="7"/>
<reference key="1">
    <citation type="journal article" date="1986" name="Virology">
        <title>Nucleotide sequence and genetic map of the 16-kb vaccinia virus HindIII D fragment.</title>
        <authorList>
            <person name="Niles E.G."/>
            <person name="Condit R.C."/>
            <person name="Caro P."/>
            <person name="Davidson K."/>
            <person name="Matusick L."/>
            <person name="Seto J."/>
        </authorList>
    </citation>
    <scope>NUCLEOTIDE SEQUENCE [GENOMIC DNA]</scope>
</reference>
<reference key="2">
    <citation type="submission" date="2003-02" db="EMBL/GenBank/DDBJ databases">
        <title>Sequencing of the coding region of Vaccinia-WR to an average 9-fold redundancy and an error rate of 0.16/10kb.</title>
        <authorList>
            <person name="Esposito J.J."/>
            <person name="Frace A.M."/>
            <person name="Sammons S.A."/>
            <person name="Olsen-Rasmussen M."/>
            <person name="Osborne J."/>
            <person name="Wohlhueter R."/>
        </authorList>
    </citation>
    <scope>NUCLEOTIDE SEQUENCE [LARGE SCALE GENOMIC DNA]</scope>
</reference>
<reference key="3">
    <citation type="journal article" date="2007" name="Proc. Natl. Acad. Sci. U.S.A.">
        <title>Vaccinia virus D10 protein has mRNA decapping activity, providing a mechanism for control of host and viral gene expression.</title>
        <authorList>
            <person name="Parrish S."/>
            <person name="Resch W."/>
            <person name="Moss B."/>
        </authorList>
    </citation>
    <scope>CHARACTERIZATION</scope>
    <scope>MUTAGENESIS OF GLU-141; GLU-144 AND GLU-145</scope>
</reference>
<reference key="4">
    <citation type="journal article" date="2009" name="Biochem. J.">
        <title>Characterization of the vaccinia virus D10 decapping enzyme provides evidence for a two-metal-ion mechanism.</title>
        <authorList>
            <person name="Souliere M.F."/>
            <person name="Perreault J.P."/>
            <person name="Bisaillon M."/>
        </authorList>
    </citation>
    <scope>CHARACTERIZATION</scope>
    <scope>COFACTOR</scope>
    <scope>MUTAGENESIS OF GLU-132; GLU-141 AND GLU-145</scope>
</reference>
<reference key="5">
    <citation type="journal article" date="2010" name="Nucleic Acids Res.">
        <title>Insights into the molecular determinants involved in cap recognition by the vaccinia virus D10 decapping enzyme.</title>
        <authorList>
            <person name="Souliere M.F."/>
            <person name="Perreault J.-P."/>
            <person name="Bisaillon M."/>
        </authorList>
    </citation>
    <scope>CHARACTERIZATION</scope>
    <scope>MUTAGENESIS OF GLU-99; ARG-118; ASP-120; LYS-129; GLU-144; ASP-167; LYS-220 AND TYR-221</scope>
</reference>
<reference key="6">
    <citation type="journal article" date="2014" name="J. Virol.">
        <title>The D10 decapping enzyme of vaccinia virus contributes to decay of cellular and viral mRNAs and to virulence in mice.</title>
        <authorList>
            <person name="Liu S.W."/>
            <person name="Wyatt L.S."/>
            <person name="Orandle M.S."/>
            <person name="Minai M."/>
            <person name="Moss B."/>
        </authorList>
    </citation>
    <scope>FUNCTION</scope>
</reference>
<reference key="7">
    <citation type="journal article" date="2022" name="PLoS Pathog.">
        <title>Vaccinia virus D10 has broad decapping activity that is regulated by mRNA splicing.</title>
        <authorList>
            <person name="Ly M."/>
            <person name="Burgess H.M."/>
            <person name="Shah S.B."/>
            <person name="Mohr I."/>
            <person name="Glaunsinger B.A."/>
        </authorList>
    </citation>
    <scope>FUNCTION</scope>
</reference>
<reference key="8">
    <citation type="journal article" date="2022" name="MBio">
        <title>A Poxvirus Decapping Enzyme Colocalizes with Mitochondria To Regulate RNA Metabolism and Translation and Promote Viral Replication.</title>
        <authorList>
            <person name="Cao S."/>
            <person name="Molina J.A."/>
            <person name="Cantu F."/>
            <person name="Hernandez C."/>
            <person name="Yang Z."/>
        </authorList>
    </citation>
    <scope>FUNCTION</scope>
    <scope>SUBCELLULAR LOCATION</scope>
    <scope>MUTAGENESIS OF ILE-9; ILE-12 AND ILE-13</scope>
</reference>
<accession>P04312</accession>
<accession>Q76ZR7</accession>
<dbReference type="EC" id="3.1.3.-"/>
<dbReference type="EMBL" id="M15058">
    <property type="protein sequence ID" value="AAA48266.1"/>
    <property type="molecule type" value="Genomic_DNA"/>
</dbReference>
<dbReference type="EMBL" id="AY243312">
    <property type="protein sequence ID" value="AAO89394.1"/>
    <property type="molecule type" value="Genomic_DNA"/>
</dbReference>
<dbReference type="PIR" id="A03886">
    <property type="entry name" value="QQVZ16"/>
</dbReference>
<dbReference type="RefSeq" id="YP_232997.1">
    <property type="nucleotide sequence ID" value="NC_006998.1"/>
</dbReference>
<dbReference type="SMR" id="P04312"/>
<dbReference type="DNASU" id="3707571"/>
<dbReference type="GeneID" id="3707571"/>
<dbReference type="KEGG" id="vg:3707571"/>
<dbReference type="Proteomes" id="UP000000344">
    <property type="component" value="Genome"/>
</dbReference>
<dbReference type="GO" id="GO:0033650">
    <property type="term" value="C:host cell mitochondrion"/>
    <property type="evidence" value="ECO:0007669"/>
    <property type="project" value="UniProtKB-SubCell"/>
</dbReference>
<dbReference type="GO" id="GO:0046872">
    <property type="term" value="F:metal ion binding"/>
    <property type="evidence" value="ECO:0007669"/>
    <property type="project" value="UniProtKB-KW"/>
</dbReference>
<dbReference type="GO" id="GO:0016791">
    <property type="term" value="F:phosphatase activity"/>
    <property type="evidence" value="ECO:0007669"/>
    <property type="project" value="InterPro"/>
</dbReference>
<dbReference type="Gene3D" id="3.90.79.10">
    <property type="entry name" value="Nucleoside Triphosphate Pyrophosphohydrolase"/>
    <property type="match status" value="1"/>
</dbReference>
<dbReference type="InterPro" id="IPR015797">
    <property type="entry name" value="NUDIX_hydrolase-like_dom_sf"/>
</dbReference>
<dbReference type="InterPro" id="IPR020084">
    <property type="entry name" value="NUDIX_hydrolase_CS"/>
</dbReference>
<dbReference type="InterPro" id="IPR000086">
    <property type="entry name" value="NUDIX_hydrolase_dom"/>
</dbReference>
<dbReference type="InterPro" id="IPR003301">
    <property type="entry name" value="Vaccinia_D10_decapping"/>
</dbReference>
<dbReference type="InterPro" id="IPR013683">
    <property type="entry name" value="Vaccinia_D10_N"/>
</dbReference>
<dbReference type="Pfam" id="PF00293">
    <property type="entry name" value="NUDIX"/>
    <property type="match status" value="1"/>
</dbReference>
<dbReference type="Pfam" id="PF08476">
    <property type="entry name" value="VD10_N"/>
    <property type="match status" value="1"/>
</dbReference>
<dbReference type="PRINTS" id="PR01364">
    <property type="entry name" value="VD10PROTEIN"/>
</dbReference>
<dbReference type="SUPFAM" id="SSF55811">
    <property type="entry name" value="Nudix"/>
    <property type="match status" value="1"/>
</dbReference>
<dbReference type="PROSITE" id="PS51462">
    <property type="entry name" value="NUDIX"/>
    <property type="match status" value="1"/>
</dbReference>
<dbReference type="PROSITE" id="PS00893">
    <property type="entry name" value="NUDIX_BOX"/>
    <property type="match status" value="1"/>
</dbReference>
<organismHost>
    <name type="scientific">Bos taurus</name>
    <name type="common">Bovine</name>
    <dbReference type="NCBI Taxonomy" id="9913"/>
</organismHost>
<gene>
    <name type="primary">OPG122</name>
    <name type="ordered locus">VACWR115</name>
    <name type="ORF">D10R</name>
</gene>
<sequence length="248" mass="28913">MNFYRSSIISQIIKYNRRLAKSIICEDDSQIITLTAFVNQCLWCHKRVSVSAILLTTDNKILVCNRRDSFLYSEIIRTRNMFRKKRLFLNYSNYLNKQERSILSSFFSLDPATADNDRIDAIYPGGIPKRGENVPECLSREIKEEVNIDNSFVFIDTRFFIHGIIEDTIINKFFEVIFFVGRISLTSDQIIDTFKSNHEIKDLIFLDPNSGNGLQYEIAKYALDTAKLKCYGHRGCYYESLKKLTEDD</sequence>
<organism>
    <name type="scientific">Vaccinia virus (strain Western Reserve)</name>
    <name type="common">VACV</name>
    <name type="synonym">Vaccinia virus (strain WR)</name>
    <dbReference type="NCBI Taxonomy" id="10254"/>
    <lineage>
        <taxon>Viruses</taxon>
        <taxon>Varidnaviria</taxon>
        <taxon>Bamfordvirae</taxon>
        <taxon>Nucleocytoviricota</taxon>
        <taxon>Pokkesviricetes</taxon>
        <taxon>Chitovirales</taxon>
        <taxon>Poxviridae</taxon>
        <taxon>Chordopoxvirinae</taxon>
        <taxon>Orthopoxvirus</taxon>
        <taxon>Vaccinia virus</taxon>
    </lineage>
</organism>